<proteinExistence type="inferred from homology"/>
<name>HIS7_STRTD</name>
<feature type="chain" id="PRO_1000010361" description="Imidazoleglycerol-phosphate dehydratase">
    <location>
        <begin position="1"/>
        <end position="194"/>
    </location>
</feature>
<comment type="catalytic activity">
    <reaction evidence="1">
        <text>D-erythro-1-(imidazol-4-yl)glycerol 3-phosphate = 3-(imidazol-4-yl)-2-oxopropyl phosphate + H2O</text>
        <dbReference type="Rhea" id="RHEA:11040"/>
        <dbReference type="ChEBI" id="CHEBI:15377"/>
        <dbReference type="ChEBI" id="CHEBI:57766"/>
        <dbReference type="ChEBI" id="CHEBI:58278"/>
        <dbReference type="EC" id="4.2.1.19"/>
    </reaction>
</comment>
<comment type="pathway">
    <text evidence="1">Amino-acid biosynthesis; L-histidine biosynthesis; L-histidine from 5-phospho-alpha-D-ribose 1-diphosphate: step 6/9.</text>
</comment>
<comment type="subcellular location">
    <subcellularLocation>
        <location evidence="1">Cytoplasm</location>
    </subcellularLocation>
</comment>
<comment type="similarity">
    <text evidence="1">Belongs to the imidazoleglycerol-phosphate dehydratase family.</text>
</comment>
<sequence>MRQAEIERNTFETKIKLSLNLDAQDPVDIQTGVGFFDHMLTLFARHGRMSLVVKADGDLWVDSHHTVEDVGIVLGQALKEALGDKAGINRYGTSFVPMDETLGMASLDLSGRSFLVFDASFDNPKLGNFDTELIEEFFQALAFNVQMNLHLKILHGKNNHHKSESLFKATGRALREAITVNPDIHGVNSTKGML</sequence>
<gene>
    <name evidence="1" type="primary">hisB</name>
    <name type="ordered locus">STER_1203</name>
</gene>
<reference key="1">
    <citation type="journal article" date="2006" name="Proc. Natl. Acad. Sci. U.S.A.">
        <title>Comparative genomics of the lactic acid bacteria.</title>
        <authorList>
            <person name="Makarova K.S."/>
            <person name="Slesarev A."/>
            <person name="Wolf Y.I."/>
            <person name="Sorokin A."/>
            <person name="Mirkin B."/>
            <person name="Koonin E.V."/>
            <person name="Pavlov A."/>
            <person name="Pavlova N."/>
            <person name="Karamychev V."/>
            <person name="Polouchine N."/>
            <person name="Shakhova V."/>
            <person name="Grigoriev I."/>
            <person name="Lou Y."/>
            <person name="Rohksar D."/>
            <person name="Lucas S."/>
            <person name="Huang K."/>
            <person name="Goodstein D.M."/>
            <person name="Hawkins T."/>
            <person name="Plengvidhya V."/>
            <person name="Welker D."/>
            <person name="Hughes J."/>
            <person name="Goh Y."/>
            <person name="Benson A."/>
            <person name="Baldwin K."/>
            <person name="Lee J.-H."/>
            <person name="Diaz-Muniz I."/>
            <person name="Dosti B."/>
            <person name="Smeianov V."/>
            <person name="Wechter W."/>
            <person name="Barabote R."/>
            <person name="Lorca G."/>
            <person name="Altermann E."/>
            <person name="Barrangou R."/>
            <person name="Ganesan B."/>
            <person name="Xie Y."/>
            <person name="Rawsthorne H."/>
            <person name="Tamir D."/>
            <person name="Parker C."/>
            <person name="Breidt F."/>
            <person name="Broadbent J.R."/>
            <person name="Hutkins R."/>
            <person name="O'Sullivan D."/>
            <person name="Steele J."/>
            <person name="Unlu G."/>
            <person name="Saier M.H. Jr."/>
            <person name="Klaenhammer T."/>
            <person name="Richardson P."/>
            <person name="Kozyavkin S."/>
            <person name="Weimer B.C."/>
            <person name="Mills D.A."/>
        </authorList>
    </citation>
    <scope>NUCLEOTIDE SEQUENCE [LARGE SCALE GENOMIC DNA]</scope>
    <source>
        <strain>ATCC BAA-491 / LMD-9</strain>
    </source>
</reference>
<evidence type="ECO:0000255" key="1">
    <source>
        <dbReference type="HAMAP-Rule" id="MF_00076"/>
    </source>
</evidence>
<dbReference type="EC" id="4.2.1.19" evidence="1"/>
<dbReference type="EMBL" id="CP000419">
    <property type="protein sequence ID" value="ABJ66393.1"/>
    <property type="molecule type" value="Genomic_DNA"/>
</dbReference>
<dbReference type="RefSeq" id="WP_011681268.1">
    <property type="nucleotide sequence ID" value="NC_008532.1"/>
</dbReference>
<dbReference type="SMR" id="Q03K79"/>
<dbReference type="KEGG" id="ste:STER_1203"/>
<dbReference type="HOGENOM" id="CLU_044308_2_0_9"/>
<dbReference type="UniPathway" id="UPA00031">
    <property type="reaction ID" value="UER00011"/>
</dbReference>
<dbReference type="GO" id="GO:0005737">
    <property type="term" value="C:cytoplasm"/>
    <property type="evidence" value="ECO:0007669"/>
    <property type="project" value="UniProtKB-SubCell"/>
</dbReference>
<dbReference type="GO" id="GO:0004424">
    <property type="term" value="F:imidazoleglycerol-phosphate dehydratase activity"/>
    <property type="evidence" value="ECO:0007669"/>
    <property type="project" value="UniProtKB-UniRule"/>
</dbReference>
<dbReference type="GO" id="GO:0000105">
    <property type="term" value="P:L-histidine biosynthetic process"/>
    <property type="evidence" value="ECO:0007669"/>
    <property type="project" value="UniProtKB-UniRule"/>
</dbReference>
<dbReference type="CDD" id="cd07914">
    <property type="entry name" value="IGPD"/>
    <property type="match status" value="1"/>
</dbReference>
<dbReference type="FunFam" id="3.30.230.40:FF:000001">
    <property type="entry name" value="Imidazoleglycerol-phosphate dehydratase HisB"/>
    <property type="match status" value="1"/>
</dbReference>
<dbReference type="FunFam" id="3.30.230.40:FF:000003">
    <property type="entry name" value="Imidazoleglycerol-phosphate dehydratase HisB"/>
    <property type="match status" value="1"/>
</dbReference>
<dbReference type="Gene3D" id="3.30.230.40">
    <property type="entry name" value="Imidazole glycerol phosphate dehydratase, domain 1"/>
    <property type="match status" value="2"/>
</dbReference>
<dbReference type="HAMAP" id="MF_00076">
    <property type="entry name" value="HisB"/>
    <property type="match status" value="1"/>
</dbReference>
<dbReference type="InterPro" id="IPR038494">
    <property type="entry name" value="IGPD_sf"/>
</dbReference>
<dbReference type="InterPro" id="IPR000807">
    <property type="entry name" value="ImidazoleglycerolP_deHydtase"/>
</dbReference>
<dbReference type="InterPro" id="IPR020565">
    <property type="entry name" value="ImidazoleglycerP_deHydtase_CS"/>
</dbReference>
<dbReference type="InterPro" id="IPR020568">
    <property type="entry name" value="Ribosomal_Su5_D2-typ_SF"/>
</dbReference>
<dbReference type="NCBIfam" id="NF002107">
    <property type="entry name" value="PRK00951.1-2"/>
    <property type="match status" value="1"/>
</dbReference>
<dbReference type="NCBIfam" id="NF002111">
    <property type="entry name" value="PRK00951.2-1"/>
    <property type="match status" value="1"/>
</dbReference>
<dbReference type="NCBIfam" id="NF002114">
    <property type="entry name" value="PRK00951.2-4"/>
    <property type="match status" value="1"/>
</dbReference>
<dbReference type="PANTHER" id="PTHR23133:SF2">
    <property type="entry name" value="IMIDAZOLEGLYCEROL-PHOSPHATE DEHYDRATASE"/>
    <property type="match status" value="1"/>
</dbReference>
<dbReference type="PANTHER" id="PTHR23133">
    <property type="entry name" value="IMIDAZOLEGLYCEROL-PHOSPHATE DEHYDRATASE HIS7"/>
    <property type="match status" value="1"/>
</dbReference>
<dbReference type="Pfam" id="PF00475">
    <property type="entry name" value="IGPD"/>
    <property type="match status" value="1"/>
</dbReference>
<dbReference type="SUPFAM" id="SSF54211">
    <property type="entry name" value="Ribosomal protein S5 domain 2-like"/>
    <property type="match status" value="2"/>
</dbReference>
<dbReference type="PROSITE" id="PS00954">
    <property type="entry name" value="IGP_DEHYDRATASE_1"/>
    <property type="match status" value="1"/>
</dbReference>
<dbReference type="PROSITE" id="PS00955">
    <property type="entry name" value="IGP_DEHYDRATASE_2"/>
    <property type="match status" value="1"/>
</dbReference>
<organism>
    <name type="scientific">Streptococcus thermophilus (strain ATCC BAA-491 / LMD-9)</name>
    <dbReference type="NCBI Taxonomy" id="322159"/>
    <lineage>
        <taxon>Bacteria</taxon>
        <taxon>Bacillati</taxon>
        <taxon>Bacillota</taxon>
        <taxon>Bacilli</taxon>
        <taxon>Lactobacillales</taxon>
        <taxon>Streptococcaceae</taxon>
        <taxon>Streptococcus</taxon>
    </lineage>
</organism>
<keyword id="KW-0028">Amino-acid biosynthesis</keyword>
<keyword id="KW-0963">Cytoplasm</keyword>
<keyword id="KW-0368">Histidine biosynthesis</keyword>
<keyword id="KW-0456">Lyase</keyword>
<accession>Q03K79</accession>
<protein>
    <recommendedName>
        <fullName evidence="1">Imidazoleglycerol-phosphate dehydratase</fullName>
        <shortName evidence="1">IGPD</shortName>
        <ecNumber evidence="1">4.2.1.19</ecNumber>
    </recommendedName>
</protein>